<name>THIE_PERMH</name>
<keyword id="KW-0460">Magnesium</keyword>
<keyword id="KW-0479">Metal-binding</keyword>
<keyword id="KW-1185">Reference proteome</keyword>
<keyword id="KW-0784">Thiamine biosynthesis</keyword>
<keyword id="KW-0808">Transferase</keyword>
<reference key="1">
    <citation type="journal article" date="2009" name="J. Bacteriol.">
        <title>Complete and draft genome sequences of six members of the Aquificales.</title>
        <authorList>
            <person name="Reysenbach A.-L."/>
            <person name="Hamamura N."/>
            <person name="Podar M."/>
            <person name="Griffiths E."/>
            <person name="Ferreira S."/>
            <person name="Hochstein R."/>
            <person name="Heidelberg J."/>
            <person name="Johnson J."/>
            <person name="Mead D."/>
            <person name="Pohorille A."/>
            <person name="Sarmiento M."/>
            <person name="Schweighofer K."/>
            <person name="Seshadri R."/>
            <person name="Voytek M.A."/>
        </authorList>
    </citation>
    <scope>NUCLEOTIDE SEQUENCE [LARGE SCALE GENOMIC DNA]</scope>
    <source>
        <strain>DSM 14350 / EX-H1</strain>
    </source>
</reference>
<proteinExistence type="inferred from homology"/>
<accession>C0QR82</accession>
<evidence type="ECO:0000255" key="1">
    <source>
        <dbReference type="HAMAP-Rule" id="MF_00097"/>
    </source>
</evidence>
<organism>
    <name type="scientific">Persephonella marina (strain DSM 14350 / EX-H1)</name>
    <dbReference type="NCBI Taxonomy" id="123214"/>
    <lineage>
        <taxon>Bacteria</taxon>
        <taxon>Pseudomonadati</taxon>
        <taxon>Aquificota</taxon>
        <taxon>Aquificia</taxon>
        <taxon>Aquificales</taxon>
        <taxon>Hydrogenothermaceae</taxon>
        <taxon>Persephonella</taxon>
    </lineage>
</organism>
<gene>
    <name evidence="1" type="primary">thiE</name>
    <name type="ordered locus">PERMA_1410</name>
</gene>
<comment type="function">
    <text evidence="1">Condenses 4-methyl-5-(beta-hydroxyethyl)thiazole monophosphate (THZ-P) and 2-methyl-4-amino-5-hydroxymethyl pyrimidine pyrophosphate (HMP-PP) to form thiamine monophosphate (TMP).</text>
</comment>
<comment type="catalytic activity">
    <reaction evidence="1">
        <text>2-[(2R,5Z)-2-carboxy-4-methylthiazol-5(2H)-ylidene]ethyl phosphate + 4-amino-2-methyl-5-(diphosphooxymethyl)pyrimidine + 2 H(+) = thiamine phosphate + CO2 + diphosphate</text>
        <dbReference type="Rhea" id="RHEA:47844"/>
        <dbReference type="ChEBI" id="CHEBI:15378"/>
        <dbReference type="ChEBI" id="CHEBI:16526"/>
        <dbReference type="ChEBI" id="CHEBI:33019"/>
        <dbReference type="ChEBI" id="CHEBI:37575"/>
        <dbReference type="ChEBI" id="CHEBI:57841"/>
        <dbReference type="ChEBI" id="CHEBI:62899"/>
        <dbReference type="EC" id="2.5.1.3"/>
    </reaction>
</comment>
<comment type="catalytic activity">
    <reaction evidence="1">
        <text>2-(2-carboxy-4-methylthiazol-5-yl)ethyl phosphate + 4-amino-2-methyl-5-(diphosphooxymethyl)pyrimidine + 2 H(+) = thiamine phosphate + CO2 + diphosphate</text>
        <dbReference type="Rhea" id="RHEA:47848"/>
        <dbReference type="ChEBI" id="CHEBI:15378"/>
        <dbReference type="ChEBI" id="CHEBI:16526"/>
        <dbReference type="ChEBI" id="CHEBI:33019"/>
        <dbReference type="ChEBI" id="CHEBI:37575"/>
        <dbReference type="ChEBI" id="CHEBI:57841"/>
        <dbReference type="ChEBI" id="CHEBI:62890"/>
        <dbReference type="EC" id="2.5.1.3"/>
    </reaction>
</comment>
<comment type="catalytic activity">
    <reaction evidence="1">
        <text>4-methyl-5-(2-phosphooxyethyl)-thiazole + 4-amino-2-methyl-5-(diphosphooxymethyl)pyrimidine + H(+) = thiamine phosphate + diphosphate</text>
        <dbReference type="Rhea" id="RHEA:22328"/>
        <dbReference type="ChEBI" id="CHEBI:15378"/>
        <dbReference type="ChEBI" id="CHEBI:33019"/>
        <dbReference type="ChEBI" id="CHEBI:37575"/>
        <dbReference type="ChEBI" id="CHEBI:57841"/>
        <dbReference type="ChEBI" id="CHEBI:58296"/>
        <dbReference type="EC" id="2.5.1.3"/>
    </reaction>
</comment>
<comment type="cofactor">
    <cofactor evidence="1">
        <name>Mg(2+)</name>
        <dbReference type="ChEBI" id="CHEBI:18420"/>
    </cofactor>
    <text evidence="1">Binds 1 Mg(2+) ion per subunit.</text>
</comment>
<comment type="pathway">
    <text evidence="1">Cofactor biosynthesis; thiamine diphosphate biosynthesis; thiamine phosphate from 4-amino-2-methyl-5-diphosphomethylpyrimidine and 4-methyl-5-(2-phosphoethyl)-thiazole: step 1/1.</text>
</comment>
<comment type="similarity">
    <text evidence="1">Belongs to the thiamine-phosphate synthase family.</text>
</comment>
<feature type="chain" id="PRO_1000202751" description="Thiamine-phosphate synthase">
    <location>
        <begin position="1"/>
        <end position="209"/>
    </location>
</feature>
<feature type="binding site" evidence="1">
    <location>
        <begin position="38"/>
        <end position="42"/>
    </location>
    <ligand>
        <name>4-amino-2-methyl-5-(diphosphooxymethyl)pyrimidine</name>
        <dbReference type="ChEBI" id="CHEBI:57841"/>
    </ligand>
</feature>
<feature type="binding site" evidence="1">
    <location>
        <position position="70"/>
    </location>
    <ligand>
        <name>4-amino-2-methyl-5-(diphosphooxymethyl)pyrimidine</name>
        <dbReference type="ChEBI" id="CHEBI:57841"/>
    </ligand>
</feature>
<feature type="binding site" evidence="1">
    <location>
        <position position="71"/>
    </location>
    <ligand>
        <name>Mg(2+)</name>
        <dbReference type="ChEBI" id="CHEBI:18420"/>
    </ligand>
</feature>
<feature type="binding site" evidence="1">
    <location>
        <position position="90"/>
    </location>
    <ligand>
        <name>Mg(2+)</name>
        <dbReference type="ChEBI" id="CHEBI:18420"/>
    </ligand>
</feature>
<feature type="binding site" evidence="1">
    <location>
        <position position="109"/>
    </location>
    <ligand>
        <name>4-amino-2-methyl-5-(diphosphooxymethyl)pyrimidine</name>
        <dbReference type="ChEBI" id="CHEBI:57841"/>
    </ligand>
</feature>
<feature type="binding site" evidence="1">
    <location>
        <begin position="135"/>
        <end position="137"/>
    </location>
    <ligand>
        <name>2-[(2R,5Z)-2-carboxy-4-methylthiazol-5(2H)-ylidene]ethyl phosphate</name>
        <dbReference type="ChEBI" id="CHEBI:62899"/>
    </ligand>
</feature>
<feature type="binding site" evidence="1">
    <location>
        <position position="138"/>
    </location>
    <ligand>
        <name>4-amino-2-methyl-5-(diphosphooxymethyl)pyrimidine</name>
        <dbReference type="ChEBI" id="CHEBI:57841"/>
    </ligand>
</feature>
<feature type="binding site" evidence="1">
    <location>
        <position position="165"/>
    </location>
    <ligand>
        <name>2-[(2R,5Z)-2-carboxy-4-methylthiazol-5(2H)-ylidene]ethyl phosphate</name>
        <dbReference type="ChEBI" id="CHEBI:62899"/>
    </ligand>
</feature>
<feature type="binding site" evidence="1">
    <location>
        <begin position="185"/>
        <end position="186"/>
    </location>
    <ligand>
        <name>2-[(2R,5Z)-2-carboxy-4-methylthiazol-5(2H)-ylidene]ethyl phosphate</name>
        <dbReference type="ChEBI" id="CHEBI:62899"/>
    </ligand>
</feature>
<protein>
    <recommendedName>
        <fullName evidence="1">Thiamine-phosphate synthase</fullName>
        <shortName evidence="1">TP synthase</shortName>
        <shortName evidence="1">TPS</shortName>
        <ecNumber evidence="1">2.5.1.3</ecNumber>
    </recommendedName>
    <alternativeName>
        <fullName evidence="1">Thiamine-phosphate pyrophosphorylase</fullName>
        <shortName evidence="1">TMP pyrophosphorylase</shortName>
        <shortName evidence="1">TMP-PPase</shortName>
    </alternativeName>
</protein>
<sequence>MERMDLSLYVITDEKLLEGKDIYSCIEQAISGGATVIQYRAKNKSSKKMYEEAVVIKKVCRKYDIPFIVNDRIDIAIAVDADGVHLGQDDLDVEVARRILGFEKIIGLSTKKIEDVIKANSLPVDYIGFGSVFPTSTKEDAVYAGLEKLKEVMKISVQPVVAIGGINEKNLTDLLKTGCRNVAVVSAVFKDDNIKENTERLKNIMENFT</sequence>
<dbReference type="EC" id="2.5.1.3" evidence="1"/>
<dbReference type="EMBL" id="CP001230">
    <property type="protein sequence ID" value="ACO04508.1"/>
    <property type="molecule type" value="Genomic_DNA"/>
</dbReference>
<dbReference type="SMR" id="C0QR82"/>
<dbReference type="STRING" id="123214.PERMA_1410"/>
<dbReference type="PaxDb" id="123214-PERMA_1410"/>
<dbReference type="KEGG" id="pmx:PERMA_1410"/>
<dbReference type="eggNOG" id="COG0352">
    <property type="taxonomic scope" value="Bacteria"/>
</dbReference>
<dbReference type="HOGENOM" id="CLU_018272_3_2_0"/>
<dbReference type="OrthoDB" id="9812206at2"/>
<dbReference type="UniPathway" id="UPA00060">
    <property type="reaction ID" value="UER00141"/>
</dbReference>
<dbReference type="Proteomes" id="UP000001366">
    <property type="component" value="Chromosome"/>
</dbReference>
<dbReference type="GO" id="GO:0005737">
    <property type="term" value="C:cytoplasm"/>
    <property type="evidence" value="ECO:0007669"/>
    <property type="project" value="TreeGrafter"/>
</dbReference>
<dbReference type="GO" id="GO:0000287">
    <property type="term" value="F:magnesium ion binding"/>
    <property type="evidence" value="ECO:0007669"/>
    <property type="project" value="UniProtKB-UniRule"/>
</dbReference>
<dbReference type="GO" id="GO:0004789">
    <property type="term" value="F:thiamine-phosphate diphosphorylase activity"/>
    <property type="evidence" value="ECO:0007669"/>
    <property type="project" value="UniProtKB-UniRule"/>
</dbReference>
<dbReference type="GO" id="GO:0009228">
    <property type="term" value="P:thiamine biosynthetic process"/>
    <property type="evidence" value="ECO:0007669"/>
    <property type="project" value="UniProtKB-KW"/>
</dbReference>
<dbReference type="GO" id="GO:0009229">
    <property type="term" value="P:thiamine diphosphate biosynthetic process"/>
    <property type="evidence" value="ECO:0007669"/>
    <property type="project" value="UniProtKB-UniRule"/>
</dbReference>
<dbReference type="CDD" id="cd00564">
    <property type="entry name" value="TMP_TenI"/>
    <property type="match status" value="1"/>
</dbReference>
<dbReference type="FunFam" id="3.20.20.70:FF:000096">
    <property type="entry name" value="Thiamine-phosphate synthase"/>
    <property type="match status" value="1"/>
</dbReference>
<dbReference type="Gene3D" id="3.20.20.70">
    <property type="entry name" value="Aldolase class I"/>
    <property type="match status" value="1"/>
</dbReference>
<dbReference type="HAMAP" id="MF_00097">
    <property type="entry name" value="TMP_synthase"/>
    <property type="match status" value="1"/>
</dbReference>
<dbReference type="InterPro" id="IPR013785">
    <property type="entry name" value="Aldolase_TIM"/>
</dbReference>
<dbReference type="InterPro" id="IPR036206">
    <property type="entry name" value="ThiamineP_synth_sf"/>
</dbReference>
<dbReference type="InterPro" id="IPR022998">
    <property type="entry name" value="ThiamineP_synth_TenI"/>
</dbReference>
<dbReference type="InterPro" id="IPR034291">
    <property type="entry name" value="TMP_synthase"/>
</dbReference>
<dbReference type="NCBIfam" id="TIGR00693">
    <property type="entry name" value="thiE"/>
    <property type="match status" value="1"/>
</dbReference>
<dbReference type="PANTHER" id="PTHR20857:SF23">
    <property type="entry name" value="THIAMINE BIOSYNTHETIC BIFUNCTIONAL ENZYME"/>
    <property type="match status" value="1"/>
</dbReference>
<dbReference type="PANTHER" id="PTHR20857">
    <property type="entry name" value="THIAMINE-PHOSPHATE PYROPHOSPHORYLASE"/>
    <property type="match status" value="1"/>
</dbReference>
<dbReference type="Pfam" id="PF02581">
    <property type="entry name" value="TMP-TENI"/>
    <property type="match status" value="1"/>
</dbReference>
<dbReference type="SUPFAM" id="SSF51391">
    <property type="entry name" value="Thiamin phosphate synthase"/>
    <property type="match status" value="1"/>
</dbReference>